<keyword id="KW-0027">Amidation</keyword>
<keyword id="KW-0903">Direct protein sequencing</keyword>
<keyword id="KW-0527">Neuropeptide</keyword>
<keyword id="KW-0964">Secreted</keyword>
<evidence type="ECO:0000250" key="1">
    <source>
        <dbReference type="UniProtKB" id="P34405"/>
    </source>
</evidence>
<evidence type="ECO:0000255" key="2"/>
<evidence type="ECO:0000269" key="3">
    <source>
    </source>
</evidence>
<evidence type="ECO:0000303" key="4">
    <source>
    </source>
</evidence>
<evidence type="ECO:0000305" key="5"/>
<evidence type="ECO:0000305" key="6">
    <source>
    </source>
</evidence>
<dbReference type="GO" id="GO:0005576">
    <property type="term" value="C:extracellular region"/>
    <property type="evidence" value="ECO:0007669"/>
    <property type="project" value="UniProtKB-SubCell"/>
</dbReference>
<dbReference type="GO" id="GO:0007218">
    <property type="term" value="P:neuropeptide signaling pathway"/>
    <property type="evidence" value="ECO:0007669"/>
    <property type="project" value="UniProtKB-KW"/>
</dbReference>
<accession>B0M3B3</accession>
<comment type="function">
    <text evidence="1">FMRFamides and FMRFamide-like peptides are neuropeptides.</text>
</comment>
<comment type="subcellular location">
    <subcellularLocation>
        <location evidence="6">Secreted</location>
    </subcellularLocation>
</comment>
<comment type="similarity">
    <text evidence="2">Belongs to the FARP (FMRF amide related peptide) family.</text>
</comment>
<proteinExistence type="evidence at protein level"/>
<protein>
    <recommendedName>
        <fullName evidence="4">Extended FMRFamide-9</fullName>
        <shortName evidence="4">FMRFa-9</shortName>
    </recommendedName>
</protein>
<feature type="peptide" id="PRO_0000420746" description="Extended FMRFamide-9" evidence="3">
    <location>
        <begin position="1"/>
        <end position="11"/>
    </location>
</feature>
<feature type="modified residue" description="Leucine amide" evidence="3">
    <location>
        <position position="11"/>
    </location>
</feature>
<feature type="unsure residue" description="L or I" evidence="3">
    <location>
        <position position="11"/>
    </location>
</feature>
<organism>
    <name type="scientific">Striatophasma naukluftense</name>
    <name type="common">Gladiator</name>
    <name type="synonym">Heel-walker</name>
    <dbReference type="NCBI Taxonomy" id="1041429"/>
    <lineage>
        <taxon>Eukaryota</taxon>
        <taxon>Metazoa</taxon>
        <taxon>Ecdysozoa</taxon>
        <taxon>Arthropoda</taxon>
        <taxon>Hexapoda</taxon>
        <taxon>Insecta</taxon>
        <taxon>Pterygota</taxon>
        <taxon>Neoptera</taxon>
        <taxon>Polyneoptera</taxon>
        <taxon>Mantophasmatodea</taxon>
        <taxon>Austrophasmatidae</taxon>
        <taxon>Striatophasma</taxon>
    </lineage>
</organism>
<reference evidence="5" key="1">
    <citation type="journal article" date="2012" name="Syst. Biol.">
        <title>Peptidomics-based phylogeny and biogeography of Mantophasmatodea (Hexapoda).</title>
        <authorList>
            <person name="Predel R."/>
            <person name="Neupert S."/>
            <person name="Huetteroth W."/>
            <person name="Kahnt J."/>
            <person name="Waidelich D."/>
            <person name="Roth S."/>
        </authorList>
    </citation>
    <scope>PROTEIN SEQUENCE</scope>
    <scope>AMIDATION AT LEU-11</scope>
    <source>
        <tissue evidence="3">Thoracic perisympathetic organs</tissue>
    </source>
</reference>
<name>FAR9_STRNA</name>
<sequence length="11" mass="1149">GRGGASNYVRL</sequence>